<dbReference type="EMBL" id="X79489">
    <property type="protein sequence ID" value="CAA55997.1"/>
    <property type="molecule type" value="Genomic_DNA"/>
</dbReference>
<dbReference type="EMBL" id="Z35861">
    <property type="protein sequence ID" value="CAA84921.1"/>
    <property type="molecule type" value="Genomic_DNA"/>
</dbReference>
<dbReference type="EMBL" id="Z35862">
    <property type="protein sequence ID" value="CAA84925.1"/>
    <property type="molecule type" value="Genomic_DNA"/>
</dbReference>
<dbReference type="EMBL" id="BK006936">
    <property type="protein sequence ID" value="DAA07025.1"/>
    <property type="molecule type" value="Genomic_DNA"/>
</dbReference>
<dbReference type="PIR" id="S45397">
    <property type="entry name" value="S45397"/>
</dbReference>
<dbReference type="RefSeq" id="NP_009451.1">
    <molecule id="Q12260-1"/>
    <property type="nucleotide sequence ID" value="NM_001180049.1"/>
</dbReference>
<dbReference type="SMR" id="Q12260"/>
<dbReference type="BioGRID" id="32603">
    <property type="interactions" value="4"/>
</dbReference>
<dbReference type="DIP" id="DIP-8933N"/>
<dbReference type="FunCoup" id="Q12260">
    <property type="interactions" value="38"/>
</dbReference>
<dbReference type="IntAct" id="Q12260">
    <property type="interactions" value="5"/>
</dbReference>
<dbReference type="MINT" id="Q12260"/>
<dbReference type="MEROPS" id="A11.003"/>
<dbReference type="iPTMnet" id="Q12260"/>
<dbReference type="PaxDb" id="4932-YBL100W-A"/>
<dbReference type="PeptideAtlas" id="Q12260"/>
<dbReference type="GeneID" id="852174"/>
<dbReference type="KEGG" id="sce:YBL100W-A"/>
<dbReference type="AGR" id="SGD:S000002148"/>
<dbReference type="SGD" id="S000002148">
    <property type="gene designation" value="YBL100W-A"/>
</dbReference>
<dbReference type="VEuPathDB" id="FungiDB:YBL100W-A"/>
<dbReference type="eggNOG" id="KOG0017">
    <property type="taxonomic scope" value="Eukaryota"/>
</dbReference>
<dbReference type="HOGENOM" id="CLU_045291_1_0_1"/>
<dbReference type="InParanoid" id="Q12260"/>
<dbReference type="OrthoDB" id="4046078at2759"/>
<dbReference type="Proteomes" id="UP000002311">
    <property type="component" value="Chromosome II"/>
</dbReference>
<dbReference type="RNAct" id="Q12260">
    <property type="molecule type" value="protein"/>
</dbReference>
<dbReference type="GO" id="GO:0005737">
    <property type="term" value="C:cytoplasm"/>
    <property type="evidence" value="ECO:0007669"/>
    <property type="project" value="UniProtKB-SubCell"/>
</dbReference>
<dbReference type="GO" id="GO:0003723">
    <property type="term" value="F:RNA binding"/>
    <property type="evidence" value="ECO:0007669"/>
    <property type="project" value="UniProtKB-KW"/>
</dbReference>
<dbReference type="GO" id="GO:0075523">
    <property type="term" value="P:viral translational frameshifting"/>
    <property type="evidence" value="ECO:0007669"/>
    <property type="project" value="UniProtKB-KW"/>
</dbReference>
<dbReference type="InterPro" id="IPR015820">
    <property type="entry name" value="TYA"/>
</dbReference>
<dbReference type="Pfam" id="PF01021">
    <property type="entry name" value="TYA"/>
    <property type="match status" value="1"/>
</dbReference>
<comment type="function">
    <text evidence="1">Capsid protein (CA) is the structural component of the virus-like particle (VLP), forming the shell that encapsulates the retrotransposons dimeric RNA genome. The particles are assembled from trimer-clustered units and there are holes in the capsid shells that allow for the diffusion of macromolecules. CA also has nucleocapsid-like chaperone activity, promoting primer tRNA(i)-Met annealing to the multipartite primer-binding site (PBS), dimerization of Ty2 RNA and initiation of reverse transcription (By similarity).</text>
</comment>
<comment type="subunit">
    <text evidence="1">Homotrimer.</text>
</comment>
<comment type="subcellular location">
    <subcellularLocation>
        <location evidence="1">Cytoplasm</location>
    </subcellularLocation>
</comment>
<comment type="alternative products">
    <event type="ribosomal frameshifting"/>
    <isoform>
        <id>Q12260-1</id>
        <name>Transposon Ty2-B Gag polyprotein</name>
        <sequence type="displayed"/>
    </isoform>
    <isoform>
        <id>Q12491-1</id>
        <name>Transposon Ty2-B Gag-Pol polyprotein</name>
        <sequence type="external"/>
    </isoform>
    <text>The Gag-Pol polyprotein is generated by a +1 ribosomal frameshift.</text>
</comment>
<comment type="domain">
    <text evidence="1">The C-terminal RNA-binding region of CA is sufficient for all its nucleocapsid-like chaperone activities.</text>
</comment>
<comment type="miscellaneous">
    <text>Retrotransposons are mobile genetic entities that are able to replicate via an RNA intermediate and a reverse transcription step. In contrast to retroviruses, retrotransposons are non-infectious, lack an envelope and remain intracellular. Ty2 retrotransposons belong to the copia elements (pseudoviridae).</text>
</comment>
<comment type="miscellaneous">
    <molecule>Isoform Transposon Ty2-B Gag polyprotein</molecule>
    <text>Produced by conventional translation.</text>
</comment>
<evidence type="ECO:0000250" key="1"/>
<evidence type="ECO:0000256" key="2">
    <source>
        <dbReference type="SAM" id="MobiDB-lite"/>
    </source>
</evidence>
<reference key="1">
    <citation type="journal article" date="1995" name="Yeast">
        <title>Sequence analysis of a 78.6 kb segment of the left end of Saccharomyces cerevisiae chromosome II.</title>
        <authorList>
            <person name="Obermaier B."/>
            <person name="Gassenhuber J."/>
            <person name="Piravandi E."/>
            <person name="Domdey H."/>
        </authorList>
    </citation>
    <scope>NUCLEOTIDE SEQUENCE [GENOMIC DNA]</scope>
    <source>
        <strain>ATCC 204508 / S288c</strain>
    </source>
</reference>
<reference key="2">
    <citation type="journal article" date="1994" name="EMBO J.">
        <title>Complete DNA sequence of yeast chromosome II.</title>
        <authorList>
            <person name="Feldmann H."/>
            <person name="Aigle M."/>
            <person name="Aljinovic G."/>
            <person name="Andre B."/>
            <person name="Baclet M.C."/>
            <person name="Barthe C."/>
            <person name="Baur A."/>
            <person name="Becam A.-M."/>
            <person name="Biteau N."/>
            <person name="Boles E."/>
            <person name="Brandt T."/>
            <person name="Brendel M."/>
            <person name="Brueckner M."/>
            <person name="Bussereau F."/>
            <person name="Christiansen C."/>
            <person name="Contreras R."/>
            <person name="Crouzet M."/>
            <person name="Cziepluch C."/>
            <person name="Demolis N."/>
            <person name="Delaveau T."/>
            <person name="Doignon F."/>
            <person name="Domdey H."/>
            <person name="Duesterhus S."/>
            <person name="Dubois E."/>
            <person name="Dujon B."/>
            <person name="El Bakkoury M."/>
            <person name="Entian K.-D."/>
            <person name="Feuermann M."/>
            <person name="Fiers W."/>
            <person name="Fobo G.M."/>
            <person name="Fritz C."/>
            <person name="Gassenhuber J."/>
            <person name="Glansdorff N."/>
            <person name="Goffeau A."/>
            <person name="Grivell L.A."/>
            <person name="de Haan M."/>
            <person name="Hein C."/>
            <person name="Herbert C.J."/>
            <person name="Hollenberg C.P."/>
            <person name="Holmstroem K."/>
            <person name="Jacq C."/>
            <person name="Jacquet M."/>
            <person name="Jauniaux J.-C."/>
            <person name="Jonniaux J.-L."/>
            <person name="Kallesoee T."/>
            <person name="Kiesau P."/>
            <person name="Kirchrath L."/>
            <person name="Koetter P."/>
            <person name="Korol S."/>
            <person name="Liebl S."/>
            <person name="Logghe M."/>
            <person name="Lohan A.J.E."/>
            <person name="Louis E.J."/>
            <person name="Li Z.Y."/>
            <person name="Maat M.J."/>
            <person name="Mallet L."/>
            <person name="Mannhaupt G."/>
            <person name="Messenguy F."/>
            <person name="Miosga T."/>
            <person name="Molemans F."/>
            <person name="Mueller S."/>
            <person name="Nasr F."/>
            <person name="Obermaier B."/>
            <person name="Perea J."/>
            <person name="Pierard A."/>
            <person name="Piravandi E."/>
            <person name="Pohl F.M."/>
            <person name="Pohl T.M."/>
            <person name="Potier S."/>
            <person name="Proft M."/>
            <person name="Purnelle B."/>
            <person name="Ramezani Rad M."/>
            <person name="Rieger M."/>
            <person name="Rose M."/>
            <person name="Schaaff-Gerstenschlaeger I."/>
            <person name="Scherens B."/>
            <person name="Schwarzlose C."/>
            <person name="Skala J."/>
            <person name="Slonimski P.P."/>
            <person name="Smits P.H.M."/>
            <person name="Souciet J.-L."/>
            <person name="Steensma H.Y."/>
            <person name="Stucka R."/>
            <person name="Urrestarazu L.A."/>
            <person name="van der Aart Q.J.M."/>
            <person name="Van Dyck L."/>
            <person name="Vassarotti A."/>
            <person name="Vetter I."/>
            <person name="Vierendeels F."/>
            <person name="Vissers S."/>
            <person name="Wagner G."/>
            <person name="de Wergifosse P."/>
            <person name="Wolfe K.H."/>
            <person name="Zagulski M."/>
            <person name="Zimmermann F.K."/>
            <person name="Mewes H.-W."/>
            <person name="Kleine K."/>
        </authorList>
    </citation>
    <scope>NUCLEOTIDE SEQUENCE [LARGE SCALE GENOMIC DNA]</scope>
    <source>
        <strain>ATCC 204508 / S288c</strain>
    </source>
</reference>
<reference key="3">
    <citation type="journal article" date="2014" name="G3 (Bethesda)">
        <title>The reference genome sequence of Saccharomyces cerevisiae: Then and now.</title>
        <authorList>
            <person name="Engel S.R."/>
            <person name="Dietrich F.S."/>
            <person name="Fisk D.G."/>
            <person name="Binkley G."/>
            <person name="Balakrishnan R."/>
            <person name="Costanzo M.C."/>
            <person name="Dwight S.S."/>
            <person name="Hitz B.C."/>
            <person name="Karra K."/>
            <person name="Nash R.S."/>
            <person name="Weng S."/>
            <person name="Wong E.D."/>
            <person name="Lloyd P."/>
            <person name="Skrzypek M.S."/>
            <person name="Miyasato S.R."/>
            <person name="Simison M."/>
            <person name="Cherry J.M."/>
        </authorList>
    </citation>
    <scope>GENOME REANNOTATION</scope>
    <source>
        <strain>ATCC 204508 / S288c</strain>
    </source>
</reference>
<reference key="4">
    <citation type="journal article" date="1998" name="Genome Res.">
        <title>Transposable elements and genome organization: a comprehensive survey of retrotransposons revealed by the complete Saccharomyces cerevisiae genome sequence.</title>
        <authorList>
            <person name="Kim J.M."/>
            <person name="Vanguri S."/>
            <person name="Boeke J.D."/>
            <person name="Gabriel A."/>
            <person name="Voytas D.F."/>
        </authorList>
    </citation>
    <scope>NOMENCLATURE</scope>
</reference>
<reference key="5">
    <citation type="journal article" date="2005" name="Cytogenet. Genome Res.">
        <title>Happy together: the life and times of Ty retrotransposons and their hosts.</title>
        <authorList>
            <person name="Lesage P."/>
            <person name="Todeschini A.L."/>
        </authorList>
    </citation>
    <scope>REVIEW</scope>
</reference>
<organism>
    <name type="scientific">Saccharomyces cerevisiae (strain ATCC 204508 / S288c)</name>
    <name type="common">Baker's yeast</name>
    <dbReference type="NCBI Taxonomy" id="559292"/>
    <lineage>
        <taxon>Eukaryota</taxon>
        <taxon>Fungi</taxon>
        <taxon>Dikarya</taxon>
        <taxon>Ascomycota</taxon>
        <taxon>Saccharomycotina</taxon>
        <taxon>Saccharomycetes</taxon>
        <taxon>Saccharomycetales</taxon>
        <taxon>Saccharomycetaceae</taxon>
        <taxon>Saccharomyces</taxon>
    </lineage>
</organism>
<proteinExistence type="inferred from homology"/>
<keyword id="KW-0963">Cytoplasm</keyword>
<keyword id="KW-1185">Reference proteome</keyword>
<keyword id="KW-0688">Ribosomal frameshifting</keyword>
<keyword id="KW-0694">RNA-binding</keyword>
<keyword id="KW-0814">Transposable element</keyword>
<feature type="chain" id="PRO_0000279275" description="Transposon Ty2-B Gag polyprotein">
    <location>
        <begin position="1"/>
        <end position="438"/>
    </location>
</feature>
<feature type="chain" id="PRO_0000279276" description="Capsid protein" evidence="1">
    <location>
        <begin position="1"/>
        <end position="397"/>
    </location>
</feature>
<feature type="peptide" id="PRO_0000279277" description="Gag-p4" evidence="1">
    <location>
        <begin position="398"/>
        <end position="438"/>
    </location>
</feature>
<feature type="region of interest" description="Disordered" evidence="2">
    <location>
        <begin position="1"/>
        <end position="88"/>
    </location>
</feature>
<feature type="region of interest" description="RNA-binding" evidence="1">
    <location>
        <begin position="295"/>
        <end position="397"/>
    </location>
</feature>
<feature type="region of interest" description="Disordered" evidence="2">
    <location>
        <begin position="364"/>
        <end position="397"/>
    </location>
</feature>
<feature type="region of interest" description="Disordered" evidence="2">
    <location>
        <begin position="419"/>
        <end position="438"/>
    </location>
</feature>
<feature type="compositionally biased region" description="Polar residues" evidence="2">
    <location>
        <begin position="1"/>
        <end position="11"/>
    </location>
</feature>
<feature type="compositionally biased region" description="Polar residues" evidence="2">
    <location>
        <begin position="19"/>
        <end position="39"/>
    </location>
</feature>
<feature type="compositionally biased region" description="Polar residues" evidence="2">
    <location>
        <begin position="49"/>
        <end position="60"/>
    </location>
</feature>
<feature type="compositionally biased region" description="Low complexity" evidence="2">
    <location>
        <begin position="369"/>
        <end position="381"/>
    </location>
</feature>
<feature type="site" description="Cleavage; by Ty2 protease" evidence="1">
    <location>
        <begin position="397"/>
        <end position="398"/>
    </location>
</feature>
<protein>
    <recommendedName>
        <fullName>Transposon Ty2-B Gag polyprotein</fullName>
        <shortName>TY2A</shortName>
        <shortName>TYA</shortName>
        <shortName>Transposon Ty2 protein A</shortName>
    </recommendedName>
    <alternativeName>
        <fullName>A-438 protein</fullName>
    </alternativeName>
    <component>
        <recommendedName>
            <fullName>Capsid protein</fullName>
            <shortName>CA</shortName>
        </recommendedName>
    </component>
    <component>
        <recommendedName>
            <fullName>Gag-p4</fullName>
        </recommendedName>
    </component>
</protein>
<accession>Q12260</accession>
<accession>D6VPQ5</accession>
<name>YB21A_YEAST</name>
<gene>
    <name type="primary">TY2A-B</name>
    <name type="synonym">YBLWTy2-1 GAG</name>
    <name type="ordered locus">YBL100W-A</name>
    <name type="ORF">YBL0821</name>
    <name type="ORF">YBL101W-A</name>
</gene>
<sequence length="438" mass="49898">MESQQLHQNPHSLHGSAYASVTSKEVSSNQDPLAVSASNLPEFDRDSTKVNSQQETTPGTSAVPENHHHVSPQPASVPPPQNGQYQQHGMMTPNKAMASNWAHYQQPSMMTCSHYQTSPAYYQPDPHYPLPQYIPPLSTSSPDPIDSQDQHSEVPQAKTKVRNNVLPPHTLTSEENFYTWVKFYIRFLKNSNLGDIIPNDQGEIKRQMTYEEHAYIYNTFQAFAPFHLLPTWVKQILEINYADILTVLCKSVSKMQTNNQELKDWIALANLEYDGSTSADTFEITVSTIIQRLKENNINVSDRLACQLILKGLSGDFKYLRNQYRTKTNMKLSQLFAEIQLIYDENKIMNLNKPSQYKQHSEYKNVSRTSPNTTNTKVTTRNYHRTNSSKPRAAKAHNIATSSKFSRVNNDHINESTVSSQYLSDDNELSLRPATERI</sequence>